<comment type="function">
    <text evidence="1">Required for respiratory activity and maintenance and expression of the mitochondrial genome.</text>
</comment>
<comment type="subcellular location">
    <subcellularLocation>
        <location evidence="1">Mitochondrion</location>
    </subcellularLocation>
</comment>
<comment type="similarity">
    <text evidence="4">Belongs to the RRG9 family.</text>
</comment>
<protein>
    <recommendedName>
        <fullName>Required for respiratory growth protein 9, mitochondrial</fullName>
    </recommendedName>
</protein>
<name>RRG9_NEUCR</name>
<proteinExistence type="inferred from homology"/>
<keyword id="KW-0496">Mitochondrion</keyword>
<keyword id="KW-1185">Reference proteome</keyword>
<keyword id="KW-0809">Transit peptide</keyword>
<reference key="1">
    <citation type="journal article" date="2003" name="Nucleic Acids Res.">
        <title>What's in the genome of a filamentous fungus? Analysis of the Neurospora genome sequence.</title>
        <authorList>
            <person name="Mannhaupt G."/>
            <person name="Montrone C."/>
            <person name="Haase D."/>
            <person name="Mewes H.-W."/>
            <person name="Aign V."/>
            <person name="Hoheisel J.D."/>
            <person name="Fartmann B."/>
            <person name="Nyakatura G."/>
            <person name="Kempken F."/>
            <person name="Maier J."/>
            <person name="Schulte U."/>
        </authorList>
    </citation>
    <scope>NUCLEOTIDE SEQUENCE [LARGE SCALE GENOMIC DNA]</scope>
    <source>
        <strain>ATCC 24698 / 74-OR23-1A / CBS 708.71 / DSM 1257 / FGSC 987</strain>
    </source>
</reference>
<reference key="2">
    <citation type="journal article" date="2003" name="Nature">
        <title>The genome sequence of the filamentous fungus Neurospora crassa.</title>
        <authorList>
            <person name="Galagan J.E."/>
            <person name="Calvo S.E."/>
            <person name="Borkovich K.A."/>
            <person name="Selker E.U."/>
            <person name="Read N.D."/>
            <person name="Jaffe D.B."/>
            <person name="FitzHugh W."/>
            <person name="Ma L.-J."/>
            <person name="Smirnov S."/>
            <person name="Purcell S."/>
            <person name="Rehman B."/>
            <person name="Elkins T."/>
            <person name="Engels R."/>
            <person name="Wang S."/>
            <person name="Nielsen C.B."/>
            <person name="Butler J."/>
            <person name="Endrizzi M."/>
            <person name="Qui D."/>
            <person name="Ianakiev P."/>
            <person name="Bell-Pedersen D."/>
            <person name="Nelson M.A."/>
            <person name="Werner-Washburne M."/>
            <person name="Selitrennikoff C.P."/>
            <person name="Kinsey J.A."/>
            <person name="Braun E.L."/>
            <person name="Zelter A."/>
            <person name="Schulte U."/>
            <person name="Kothe G.O."/>
            <person name="Jedd G."/>
            <person name="Mewes H.-W."/>
            <person name="Staben C."/>
            <person name="Marcotte E."/>
            <person name="Greenberg D."/>
            <person name="Roy A."/>
            <person name="Foley K."/>
            <person name="Naylor J."/>
            <person name="Stange-Thomann N."/>
            <person name="Barrett R."/>
            <person name="Gnerre S."/>
            <person name="Kamal M."/>
            <person name="Kamvysselis M."/>
            <person name="Mauceli E.W."/>
            <person name="Bielke C."/>
            <person name="Rudd S."/>
            <person name="Frishman D."/>
            <person name="Krystofova S."/>
            <person name="Rasmussen C."/>
            <person name="Metzenberg R.L."/>
            <person name="Perkins D.D."/>
            <person name="Kroken S."/>
            <person name="Cogoni C."/>
            <person name="Macino G."/>
            <person name="Catcheside D.E.A."/>
            <person name="Li W."/>
            <person name="Pratt R.J."/>
            <person name="Osmani S.A."/>
            <person name="DeSouza C.P.C."/>
            <person name="Glass N.L."/>
            <person name="Orbach M.J."/>
            <person name="Berglund J.A."/>
            <person name="Voelker R."/>
            <person name="Yarden O."/>
            <person name="Plamann M."/>
            <person name="Seiler S."/>
            <person name="Dunlap J.C."/>
            <person name="Radford A."/>
            <person name="Aramayo R."/>
            <person name="Natvig D.O."/>
            <person name="Alex L.A."/>
            <person name="Mannhaupt G."/>
            <person name="Ebbole D.J."/>
            <person name="Freitag M."/>
            <person name="Paulsen I."/>
            <person name="Sachs M.S."/>
            <person name="Lander E.S."/>
            <person name="Nusbaum C."/>
            <person name="Birren B.W."/>
        </authorList>
    </citation>
    <scope>NUCLEOTIDE SEQUENCE [LARGE SCALE GENOMIC DNA]</scope>
    <source>
        <strain>ATCC 24698 / 74-OR23-1A / CBS 708.71 / DSM 1257 / FGSC 987</strain>
    </source>
</reference>
<organism>
    <name type="scientific">Neurospora crassa (strain ATCC 24698 / 74-OR23-1A / CBS 708.71 / DSM 1257 / FGSC 987)</name>
    <dbReference type="NCBI Taxonomy" id="367110"/>
    <lineage>
        <taxon>Eukaryota</taxon>
        <taxon>Fungi</taxon>
        <taxon>Dikarya</taxon>
        <taxon>Ascomycota</taxon>
        <taxon>Pezizomycotina</taxon>
        <taxon>Sordariomycetes</taxon>
        <taxon>Sordariomycetidae</taxon>
        <taxon>Sordariales</taxon>
        <taxon>Sordariaceae</taxon>
        <taxon>Neurospora</taxon>
    </lineage>
</organism>
<sequence>MSCSCNTAALRIFVRNVANIQVPSSQQVTPRALPGFRRQMTTSLPFHTRSLHTTRAARSDSTEAVSEETSTATEKPKAPKLLFRKTHAPANPNWMGEQPPRRQDHKPRELKKARRDHGAHASQEEGDHTEPTKKKNRWRDLPEEERRELYAKMGKEMPDEAERQARKQEQQQQKLRASLEEPKKHNPAHPRRESWQHQKNALKEKFPEGWKPLKKLSPDALEGIRALHKQFPEEYTTEVLSNKFQVSPEAIRRILKSKWRPDPEEEIERQERWFKRGKQIWQRYAELGVKPPKKWREQGIRPNKYWKEGEEKTFKDRQIANVKLHRSLL</sequence>
<gene>
    <name type="primary">rrg9</name>
    <name type="ORF">B5O22.190</name>
    <name type="ORF">NCU01506</name>
</gene>
<dbReference type="EMBL" id="AL355932">
    <property type="protein sequence ID" value="CAB91438.1"/>
    <property type="molecule type" value="Genomic_DNA"/>
</dbReference>
<dbReference type="EMBL" id="CM002237">
    <property type="protein sequence ID" value="EAA27719.1"/>
    <property type="molecule type" value="Genomic_DNA"/>
</dbReference>
<dbReference type="PIR" id="T49637">
    <property type="entry name" value="T49637"/>
</dbReference>
<dbReference type="RefSeq" id="XP_956955.1">
    <property type="nucleotide sequence ID" value="XM_951862.2"/>
</dbReference>
<dbReference type="SMR" id="Q9P5T3"/>
<dbReference type="STRING" id="367110.Q9P5T3"/>
<dbReference type="PaxDb" id="5141-EFNCRP00000001844"/>
<dbReference type="EnsemblFungi" id="EAA27719">
    <property type="protein sequence ID" value="EAA27719"/>
    <property type="gene ID" value="NCU01506"/>
</dbReference>
<dbReference type="GeneID" id="3873118"/>
<dbReference type="KEGG" id="ncr:NCU01506"/>
<dbReference type="VEuPathDB" id="FungiDB:NCU01506"/>
<dbReference type="HOGENOM" id="CLU_047598_0_0_1"/>
<dbReference type="InParanoid" id="Q9P5T3"/>
<dbReference type="OrthoDB" id="5578174at2759"/>
<dbReference type="Proteomes" id="UP000001805">
    <property type="component" value="Chromosome 6, Linkage Group II"/>
</dbReference>
<dbReference type="GO" id="GO:0005739">
    <property type="term" value="C:mitochondrion"/>
    <property type="evidence" value="ECO:0007669"/>
    <property type="project" value="UniProtKB-SubCell"/>
</dbReference>
<dbReference type="GO" id="GO:0005634">
    <property type="term" value="C:nucleus"/>
    <property type="evidence" value="ECO:0000318"/>
    <property type="project" value="GO_Central"/>
</dbReference>
<dbReference type="InterPro" id="IPR010487">
    <property type="entry name" value="NGRN/Rrg9"/>
</dbReference>
<dbReference type="PANTHER" id="PTHR13475">
    <property type="entry name" value="NEUGRIN"/>
    <property type="match status" value="1"/>
</dbReference>
<dbReference type="PANTHER" id="PTHR13475:SF3">
    <property type="entry name" value="NEUGRIN"/>
    <property type="match status" value="1"/>
</dbReference>
<dbReference type="Pfam" id="PF06413">
    <property type="entry name" value="Neugrin"/>
    <property type="match status" value="1"/>
</dbReference>
<feature type="transit peptide" description="Mitochondrion" evidence="2">
    <location>
        <begin position="1"/>
        <end position="59"/>
    </location>
</feature>
<feature type="chain" id="PRO_0000407953" description="Required for respiratory growth protein 9, mitochondrial">
    <location>
        <begin position="60"/>
        <end position="329"/>
    </location>
</feature>
<feature type="region of interest" description="Disordered" evidence="3">
    <location>
        <begin position="47"/>
        <end position="144"/>
    </location>
</feature>
<feature type="region of interest" description="Disordered" evidence="3">
    <location>
        <begin position="157"/>
        <end position="199"/>
    </location>
</feature>
<feature type="compositionally biased region" description="Low complexity" evidence="3">
    <location>
        <begin position="62"/>
        <end position="73"/>
    </location>
</feature>
<feature type="compositionally biased region" description="Basic residues" evidence="3">
    <location>
        <begin position="103"/>
        <end position="115"/>
    </location>
</feature>
<feature type="compositionally biased region" description="Basic and acidic residues" evidence="3">
    <location>
        <begin position="116"/>
        <end position="144"/>
    </location>
</feature>
<feature type="compositionally biased region" description="Basic and acidic residues" evidence="3">
    <location>
        <begin position="157"/>
        <end position="169"/>
    </location>
</feature>
<feature type="compositionally biased region" description="Basic and acidic residues" evidence="3">
    <location>
        <begin position="177"/>
        <end position="199"/>
    </location>
</feature>
<evidence type="ECO:0000250" key="1"/>
<evidence type="ECO:0000255" key="2"/>
<evidence type="ECO:0000256" key="3">
    <source>
        <dbReference type="SAM" id="MobiDB-lite"/>
    </source>
</evidence>
<evidence type="ECO:0000305" key="4"/>
<accession>Q9P5T3</accession>